<evidence type="ECO:0000255" key="1"/>
<evidence type="ECO:0000255" key="2">
    <source>
        <dbReference type="PROSITE-ProRule" id="PRU00523"/>
    </source>
</evidence>
<evidence type="ECO:0000269" key="3">
    <source>
    </source>
</evidence>
<evidence type="ECO:0000269" key="4">
    <source>
    </source>
</evidence>
<evidence type="ECO:0000305" key="5"/>
<evidence type="ECO:0007829" key="6">
    <source>
        <dbReference type="PDB" id="3WNM"/>
    </source>
</evidence>
<evidence type="ECO:0007829" key="7">
    <source>
        <dbReference type="PDB" id="3WNN"/>
    </source>
</evidence>
<evidence type="ECO:0007829" key="8">
    <source>
        <dbReference type="PDB" id="3WNO"/>
    </source>
</evidence>
<evidence type="ECO:0007829" key="9">
    <source>
        <dbReference type="PDB" id="3WNP"/>
    </source>
</evidence>
<accession>P94286</accession>
<dbReference type="EC" id="2.4.1.248"/>
<dbReference type="EMBL" id="D61382">
    <property type="protein sequence ID" value="BAA09604.1"/>
    <property type="molecule type" value="Genomic_DNA"/>
</dbReference>
<dbReference type="PDB" id="3WNK">
    <property type="method" value="X-ray"/>
    <property type="resolution" value="2.30 A"/>
    <property type="chains" value="A=39-738"/>
</dbReference>
<dbReference type="PDB" id="3WNL">
    <property type="method" value="X-ray"/>
    <property type="resolution" value="2.60 A"/>
    <property type="chains" value="A=39-738"/>
</dbReference>
<dbReference type="PDB" id="3WNM">
    <property type="method" value="X-ray"/>
    <property type="resolution" value="2.25 A"/>
    <property type="chains" value="A=39-738"/>
</dbReference>
<dbReference type="PDB" id="3WNN">
    <property type="method" value="X-ray"/>
    <property type="resolution" value="2.25 A"/>
    <property type="chains" value="A/B=39-738"/>
</dbReference>
<dbReference type="PDB" id="3WNO">
    <property type="method" value="X-ray"/>
    <property type="resolution" value="1.90 A"/>
    <property type="chains" value="A/B=39-738"/>
</dbReference>
<dbReference type="PDB" id="3WNP">
    <property type="method" value="X-ray"/>
    <property type="resolution" value="2.80 A"/>
    <property type="chains" value="A/B=39-738"/>
</dbReference>
<dbReference type="PDBsum" id="3WNK"/>
<dbReference type="PDBsum" id="3WNL"/>
<dbReference type="PDBsum" id="3WNM"/>
<dbReference type="PDBsum" id="3WNN"/>
<dbReference type="PDBsum" id="3WNO"/>
<dbReference type="PDBsum" id="3WNP"/>
<dbReference type="SMR" id="P94286"/>
<dbReference type="CAZy" id="CBM35">
    <property type="family name" value="Carbohydrate-Binding Module Family 35"/>
</dbReference>
<dbReference type="CAZy" id="GH66">
    <property type="family name" value="Glycoside Hydrolase Family 66"/>
</dbReference>
<dbReference type="KEGG" id="ag:BAA09604"/>
<dbReference type="BRENDA" id="2.4.1.248">
    <property type="organism ID" value="649"/>
</dbReference>
<dbReference type="EvolutionaryTrace" id="P94286"/>
<dbReference type="GO" id="GO:0030246">
    <property type="term" value="F:carbohydrate binding"/>
    <property type="evidence" value="ECO:0007669"/>
    <property type="project" value="InterPro"/>
</dbReference>
<dbReference type="GO" id="GO:0016757">
    <property type="term" value="F:glycosyltransferase activity"/>
    <property type="evidence" value="ECO:0007669"/>
    <property type="project" value="UniProtKB-KW"/>
</dbReference>
<dbReference type="CDD" id="cd04083">
    <property type="entry name" value="CBM35_Lmo2446-like"/>
    <property type="match status" value="2"/>
</dbReference>
<dbReference type="CDD" id="cd14745">
    <property type="entry name" value="GH66"/>
    <property type="match status" value="1"/>
</dbReference>
<dbReference type="Gene3D" id="2.60.120.260">
    <property type="entry name" value="Galactose-binding domain-like"/>
    <property type="match status" value="2"/>
</dbReference>
<dbReference type="Gene3D" id="3.20.20.80">
    <property type="entry name" value="Glycosidases"/>
    <property type="match status" value="1"/>
</dbReference>
<dbReference type="Gene3D" id="2.60.40.1180">
    <property type="entry name" value="Golgi alpha-mannosidase II"/>
    <property type="match status" value="1"/>
</dbReference>
<dbReference type="Gene3D" id="2.60.40.10">
    <property type="entry name" value="Immunoglobulins"/>
    <property type="match status" value="1"/>
</dbReference>
<dbReference type="InterPro" id="IPR005084">
    <property type="entry name" value="CBM6"/>
</dbReference>
<dbReference type="InterPro" id="IPR008979">
    <property type="entry name" value="Galactose-bd-like_sf"/>
</dbReference>
<dbReference type="InterPro" id="IPR025092">
    <property type="entry name" value="Glyco_hydro_66"/>
</dbReference>
<dbReference type="InterPro" id="IPR013780">
    <property type="entry name" value="Glyco_hydro_b"/>
</dbReference>
<dbReference type="InterPro" id="IPR013783">
    <property type="entry name" value="Ig-like_fold"/>
</dbReference>
<dbReference type="Pfam" id="PF16990">
    <property type="entry name" value="CBM_35"/>
    <property type="match status" value="1"/>
</dbReference>
<dbReference type="Pfam" id="PF03422">
    <property type="entry name" value="CBM_6"/>
    <property type="match status" value="1"/>
</dbReference>
<dbReference type="Pfam" id="PF13199">
    <property type="entry name" value="Glyco_hydro_66"/>
    <property type="match status" value="1"/>
</dbReference>
<dbReference type="SUPFAM" id="SSF49785">
    <property type="entry name" value="Galactose-binding domain-like"/>
    <property type="match status" value="2"/>
</dbReference>
<dbReference type="PROSITE" id="PS51175">
    <property type="entry name" value="CBM6"/>
    <property type="match status" value="2"/>
</dbReference>
<sequence>MVRFMYALRKRRLSLLLAMSLLVMCVASVVSPPPQALASGSGGIERVFTDKARYNPGDAVSIRVQAKNGTGSSWSGAARLEIFHLENSVYTSSQSLSLTNGQSTTLTFTWTAPSTDFRGYFVRIDAGTLGQGATAIDVSSDFTKYPRYGYISEFESGETALESKAKVDQLAQDYHINAWQFYDWMWRHDKMIKRTGGSIDSTWLDLFNREISWSTLQNQIDAVHDVNGKAMAYAMIYASRENYSPLGISPTWGIYEDSSHTNQFDVDFGDGSTYLYMSDPQNPNWQNYIHAEYIDSINTAGFDGIHVDQMGQRSNVYDYNGNSIDLSTRFSPFLDQAKSVLSANNPARDNLTYNIVDGTVNGWAVNDVSKNADLDFLYSEIWYLSDSYNQLKNYIEQLRANGGNKAVVLAAYMNYADNAGTRYEAESASMTNVSTNTNHAGYTGSGFVDQFASTGDKVSFAINAPEAGDYSLVFRYGNNTGANSTLNLYVDGNFVQKLYFFNQSSWGTWKHDAWYQVPLTQGAHTVELRYESGNVGAVNLDSLTLGTFDEHSVRLADAMMSASGATHIELGDDNQMLPHEYYPNRSKTMRSSLKNAMKDHYNFITAYENLLFDSDVVPNDTGSQFVNLTGVSASGDGSANTVWYINKRTSDYNIVHLINLLGNDNQWRNTASQPSFQTNLPAKIYIGADETISDVYLASPDLSGGETQELAFTSGTDAGGKYVSFTVPELKYWNMIYMKRTFSVPANDIYEAETAIKSNVSTNTNHAGYTGSGFVDGFSSTNDGVSFVVKSTASDDYALRFRYANGGSDATRDVYVDGKLAGTVSFKSTGSWSTWSYGEITARLEPGHHTIVLWQTSGNTGAINLDHLDLDKTYIWQFDRQIVSVPAGYRITFRTGLPGWVHWGVNGWTGVTDTPLRSNGSLDGNLDHETSIGPFATGTAVDVTFLWDDNNNGILEPSTDRWEGTDFGINVS</sequence>
<protein>
    <recommendedName>
        <fullName>Cycloisomaltooligosaccharide glucanotransferase</fullName>
        <shortName>CITase</shortName>
        <ecNumber>2.4.1.248</ecNumber>
    </recommendedName>
</protein>
<reference key="1">
    <citation type="journal article" date="1995" name="J. Appl. Glycosci.">
        <title>Cloning and sequence analysis of the cycloisomaltooligosaccharide glucanotransferase gene from Bacillus circulans T-3040 and expression in Escherichia coli cells.</title>
        <authorList>
            <person name="Oguma T."/>
            <person name="Kurokawa T."/>
            <person name="Tobe K."/>
            <person name="Kobayashi M."/>
        </authorList>
    </citation>
    <scope>NUCLEOTIDE SEQUENCE [GENOMIC DNA]</scope>
    <source>
        <strain>T-3040</strain>
    </source>
</reference>
<reference key="2">
    <citation type="journal article" date="1994" name="FEBS Lett.">
        <title>Purification and properties of a novel enzyme from Bacillus spp. T-3040, which catalyzes the conversion of dextran to cyclic isomaltooligosaccharides.</title>
        <authorList>
            <person name="Oguma T."/>
            <person name="Tobe K."/>
            <person name="Kobayashi M."/>
        </authorList>
    </citation>
    <scope>FUNCTION</scope>
    <scope>CATALYTIC ACTIVITY</scope>
    <scope>SUBUNIT</scope>
    <scope>PH DEPENDENCE</scope>
    <source>
        <strain>T-3040</strain>
    </source>
</reference>
<reference key="3">
    <citation type="journal article" date="1994" name="FEBS Lett.">
        <authorList>
            <person name="Oguma T."/>
            <person name="Tobe K."/>
            <person name="Kobayashi M."/>
        </authorList>
    </citation>
    <scope>ERRATUM OF PUBMED:7515357</scope>
</reference>
<reference key="4">
    <citation type="journal article" date="2006" name="Biosci. Biotechnol. Biochem.">
        <title>Identification of catalytic amino acids of cyclodextran glucanotransferase from Bacillus circulans T-3040.</title>
        <authorList>
            <person name="Yamamoto T."/>
            <person name="Terasawa K."/>
            <person name="Kim Y.M."/>
            <person name="Kimura A."/>
            <person name="Kitamura Y."/>
            <person name="Kobayashi M."/>
            <person name="Funane K."/>
        </authorList>
    </citation>
    <scope>MUTAGENESIS OF ASP-183 AND ASP-308</scope>
    <scope>BIOPHYSICOCHEMICAL PROPERTIES</scope>
    <source>
        <strain>T-3040</strain>
    </source>
</reference>
<proteinExistence type="evidence at protein level"/>
<organism>
    <name type="scientific">Niallia circulans</name>
    <name type="common">Bacillus circulans</name>
    <dbReference type="NCBI Taxonomy" id="1397"/>
    <lineage>
        <taxon>Bacteria</taxon>
        <taxon>Bacillati</taxon>
        <taxon>Bacillota</taxon>
        <taxon>Bacilli</taxon>
        <taxon>Bacillales</taxon>
        <taxon>Bacillaceae</taxon>
        <taxon>Niallia</taxon>
    </lineage>
</organism>
<feature type="signal peptide" evidence="1">
    <location>
        <begin position="1"/>
        <end position="38"/>
    </location>
</feature>
<feature type="chain" id="PRO_0000012241" description="Cycloisomaltooligosaccharide glucanotransferase">
    <location>
        <begin position="39"/>
        <end position="972"/>
    </location>
</feature>
<feature type="domain" description="CBM6 1" evidence="2">
    <location>
        <begin position="421"/>
        <end position="546"/>
    </location>
</feature>
<feature type="domain" description="CBM6 2" evidence="2">
    <location>
        <begin position="748"/>
        <end position="871"/>
    </location>
</feature>
<feature type="mutagenesis site" description="Has 1% of wild-type activity." evidence="3">
    <original>D</original>
    <variation>N</variation>
    <location>
        <position position="183"/>
    </location>
</feature>
<feature type="mutagenesis site" description="No activity." evidence="3">
    <original>D</original>
    <variation>N</variation>
    <location>
        <position position="308"/>
    </location>
</feature>
<feature type="strand" evidence="8">
    <location>
        <begin position="44"/>
        <end position="50"/>
    </location>
</feature>
<feature type="strand" evidence="7">
    <location>
        <begin position="52"/>
        <end position="54"/>
    </location>
</feature>
<feature type="strand" evidence="8">
    <location>
        <begin position="59"/>
        <end position="67"/>
    </location>
</feature>
<feature type="strand" evidence="8">
    <location>
        <begin position="70"/>
        <end position="72"/>
    </location>
</feature>
<feature type="strand" evidence="8">
    <location>
        <begin position="74"/>
        <end position="84"/>
    </location>
</feature>
<feature type="strand" evidence="8">
    <location>
        <begin position="87"/>
        <end position="98"/>
    </location>
</feature>
<feature type="strand" evidence="8">
    <location>
        <begin position="103"/>
        <end position="111"/>
    </location>
</feature>
<feature type="strand" evidence="8">
    <location>
        <begin position="114"/>
        <end position="125"/>
    </location>
</feature>
<feature type="helix" evidence="8">
    <location>
        <begin position="127"/>
        <end position="129"/>
    </location>
</feature>
<feature type="strand" evidence="8">
    <location>
        <begin position="131"/>
        <end position="138"/>
    </location>
</feature>
<feature type="helix" evidence="8">
    <location>
        <begin position="142"/>
        <end position="144"/>
    </location>
</feature>
<feature type="strand" evidence="8">
    <location>
        <begin position="148"/>
        <end position="151"/>
    </location>
</feature>
<feature type="helix" evidence="8">
    <location>
        <begin position="160"/>
        <end position="174"/>
    </location>
</feature>
<feature type="strand" evidence="8">
    <location>
        <begin position="178"/>
        <end position="181"/>
    </location>
</feature>
<feature type="strand" evidence="8">
    <location>
        <begin position="185"/>
        <end position="187"/>
    </location>
</feature>
<feature type="strand" evidence="8">
    <location>
        <begin position="201"/>
        <end position="204"/>
    </location>
</feature>
<feature type="strand" evidence="8">
    <location>
        <begin position="210"/>
        <end position="212"/>
    </location>
</feature>
<feature type="helix" evidence="8">
    <location>
        <begin position="213"/>
        <end position="225"/>
    </location>
</feature>
<feature type="strand" evidence="8">
    <location>
        <begin position="229"/>
        <end position="242"/>
    </location>
</feature>
<feature type="helix" evidence="8">
    <location>
        <begin position="244"/>
        <end position="246"/>
    </location>
</feature>
<feature type="helix" evidence="8">
    <location>
        <begin position="250"/>
        <end position="252"/>
    </location>
</feature>
<feature type="strand" evidence="8">
    <location>
        <begin position="253"/>
        <end position="257"/>
    </location>
</feature>
<feature type="strand" evidence="8">
    <location>
        <begin position="265"/>
        <end position="267"/>
    </location>
</feature>
<feature type="strand" evidence="8">
    <location>
        <begin position="269"/>
        <end position="272"/>
    </location>
</feature>
<feature type="strand" evidence="8">
    <location>
        <begin position="274"/>
        <end position="278"/>
    </location>
</feature>
<feature type="helix" evidence="8">
    <location>
        <begin position="283"/>
        <end position="300"/>
    </location>
</feature>
<feature type="strand" evidence="8">
    <location>
        <begin position="303"/>
        <end position="308"/>
    </location>
</feature>
<feature type="strand" evidence="8">
    <location>
        <begin position="315"/>
        <end position="318"/>
    </location>
</feature>
<feature type="helix" evidence="8">
    <location>
        <begin position="326"/>
        <end position="328"/>
    </location>
</feature>
<feature type="helix" evidence="8">
    <location>
        <begin position="330"/>
        <end position="344"/>
    </location>
</feature>
<feature type="helix" evidence="9">
    <location>
        <begin position="346"/>
        <end position="348"/>
    </location>
</feature>
<feature type="strand" evidence="8">
    <location>
        <begin position="350"/>
        <end position="357"/>
    </location>
</feature>
<feature type="helix" evidence="8">
    <location>
        <begin position="365"/>
        <end position="371"/>
    </location>
</feature>
<feature type="strand" evidence="8">
    <location>
        <begin position="375"/>
        <end position="380"/>
    </location>
</feature>
<feature type="strand" evidence="6">
    <location>
        <begin position="383"/>
        <end position="385"/>
    </location>
</feature>
<feature type="helix" evidence="8">
    <location>
        <begin position="388"/>
        <end position="401"/>
    </location>
</feature>
<feature type="strand" evidence="8">
    <location>
        <begin position="407"/>
        <end position="410"/>
    </location>
</feature>
<feature type="turn" evidence="8">
    <location>
        <begin position="413"/>
        <end position="416"/>
    </location>
</feature>
<feature type="strand" evidence="8">
    <location>
        <begin position="420"/>
        <end position="424"/>
    </location>
</feature>
<feature type="helix" evidence="8">
    <location>
        <begin position="425"/>
        <end position="427"/>
    </location>
</feature>
<feature type="strand" evidence="8">
    <location>
        <begin position="428"/>
        <end position="432"/>
    </location>
</feature>
<feature type="strand" evidence="7">
    <location>
        <begin position="434"/>
        <end position="436"/>
    </location>
</feature>
<feature type="strand" evidence="9">
    <location>
        <begin position="439"/>
        <end position="441"/>
    </location>
</feature>
<feature type="strand" evidence="8">
    <location>
        <begin position="447"/>
        <end position="451"/>
    </location>
</feature>
<feature type="strand" evidence="8">
    <location>
        <begin position="457"/>
        <end position="477"/>
    </location>
</feature>
<feature type="strand" evidence="8">
    <location>
        <begin position="480"/>
        <end position="482"/>
    </location>
</feature>
<feature type="strand" evidence="8">
    <location>
        <begin position="484"/>
        <end position="490"/>
    </location>
</feature>
<feature type="strand" evidence="8">
    <location>
        <begin position="493"/>
        <end position="500"/>
    </location>
</feature>
<feature type="strand" evidence="9">
    <location>
        <begin position="504"/>
        <end position="507"/>
    </location>
</feature>
<feature type="strand" evidence="8">
    <location>
        <begin position="509"/>
        <end position="519"/>
    </location>
</feature>
<feature type="strand" evidence="8">
    <location>
        <begin position="521"/>
        <end position="529"/>
    </location>
</feature>
<feature type="strand" evidence="8">
    <location>
        <begin position="538"/>
        <end position="547"/>
    </location>
</feature>
<feature type="helix" evidence="8">
    <location>
        <begin position="550"/>
        <end position="562"/>
    </location>
</feature>
<feature type="strand" evidence="8">
    <location>
        <begin position="566"/>
        <end position="568"/>
    </location>
</feature>
<feature type="turn" evidence="8">
    <location>
        <begin position="572"/>
        <end position="574"/>
    </location>
</feature>
<feature type="strand" evidence="8">
    <location>
        <begin position="579"/>
        <end position="581"/>
    </location>
</feature>
<feature type="strand" evidence="8">
    <location>
        <begin position="586"/>
        <end position="588"/>
    </location>
</feature>
<feature type="helix" evidence="8">
    <location>
        <begin position="591"/>
        <end position="606"/>
    </location>
</feature>
<feature type="helix" evidence="8">
    <location>
        <begin position="608"/>
        <end position="612"/>
    </location>
</feature>
<feature type="strand" evidence="8">
    <location>
        <begin position="621"/>
        <end position="623"/>
    </location>
</feature>
<feature type="strand" evidence="8">
    <location>
        <begin position="626"/>
        <end position="628"/>
    </location>
</feature>
<feature type="strand" evidence="8">
    <location>
        <begin position="633"/>
        <end position="636"/>
    </location>
</feature>
<feature type="strand" evidence="8">
    <location>
        <begin position="641"/>
        <end position="648"/>
    </location>
</feature>
<feature type="strand" evidence="8">
    <location>
        <begin position="650"/>
        <end position="659"/>
    </location>
</feature>
<feature type="strand" evidence="8">
    <location>
        <begin position="665"/>
        <end position="669"/>
    </location>
</feature>
<feature type="strand" evidence="8">
    <location>
        <begin position="677"/>
        <end position="686"/>
    </location>
</feature>
<feature type="strand" evidence="8">
    <location>
        <begin position="692"/>
        <end position="698"/>
    </location>
</feature>
<feature type="helix" evidence="8">
    <location>
        <begin position="703"/>
        <end position="705"/>
    </location>
</feature>
<feature type="strand" evidence="8">
    <location>
        <begin position="708"/>
        <end position="710"/>
    </location>
</feature>
<feature type="strand" evidence="8">
    <location>
        <begin position="713"/>
        <end position="717"/>
    </location>
</feature>
<feature type="strand" evidence="8">
    <location>
        <begin position="720"/>
        <end position="738"/>
    </location>
</feature>
<name>CTA1_NIACI</name>
<keyword id="KW-0002">3D-structure</keyword>
<keyword id="KW-0328">Glycosyltransferase</keyword>
<keyword id="KW-0677">Repeat</keyword>
<keyword id="KW-0732">Signal</keyword>
<keyword id="KW-0808">Transferase</keyword>
<comment type="function">
    <text evidence="4">Produces cycloisomaltooligosaccharide from dextran containing 7, 8 or 9 glucose units. The enzyme is specific for (1-&gt;6)-alpha-D-glucans (dextrans) and, without activity toward (1-&gt;4)-alpha-D-glucans, such as amylose. It also has no activity on oligosaccharides, such as amylopectin and pullulan, containing (1-&gt;6)-alpha-D-glucosidic linkages at branch points.</text>
</comment>
<comment type="catalytic activity">
    <reaction evidence="4">
        <text>cyclizes part of a (1-&gt;6)-alpha-D-glucan chain by formation of a (1-&gt;6)-alpha-D-glucosidic bond.</text>
        <dbReference type="EC" id="2.4.1.248"/>
    </reaction>
</comment>
<comment type="biophysicochemical properties">
    <kinetics>
        <KM evidence="3">0.063 mM for dextran T-40</KM>
        <Vmax evidence="3">0.872 pmol/min/ug enzyme with dextran T-40 as substrate</Vmax>
    </kinetics>
    <phDependence>
        <text evidence="3 4">Optimum pH is 5.5.</text>
    </phDependence>
</comment>
<comment type="subunit">
    <text evidence="4">Monomer.</text>
</comment>
<comment type="similarity">
    <text evidence="5">Belongs to the glycosyl hydrolase 66 family.</text>
</comment>